<gene>
    <name evidence="1" type="primary">rps17e</name>
    <name type="ordered locus">AF_0911</name>
</gene>
<protein>
    <recommendedName>
        <fullName evidence="1">Small ribosomal subunit protein eS17</fullName>
    </recommendedName>
    <alternativeName>
        <fullName evidence="2">30S ribosomal protein S17e</fullName>
    </alternativeName>
</protein>
<reference key="1">
    <citation type="journal article" date="1997" name="Nature">
        <title>The complete genome sequence of the hyperthermophilic, sulphate-reducing archaeon Archaeoglobus fulgidus.</title>
        <authorList>
            <person name="Klenk H.-P."/>
            <person name="Clayton R.A."/>
            <person name="Tomb J.-F."/>
            <person name="White O."/>
            <person name="Nelson K.E."/>
            <person name="Ketchum K.A."/>
            <person name="Dodson R.J."/>
            <person name="Gwinn M.L."/>
            <person name="Hickey E.K."/>
            <person name="Peterson J.D."/>
            <person name="Richardson D.L."/>
            <person name="Kerlavage A.R."/>
            <person name="Graham D.E."/>
            <person name="Kyrpides N.C."/>
            <person name="Fleischmann R.D."/>
            <person name="Quackenbush J."/>
            <person name="Lee N.H."/>
            <person name="Sutton G.G."/>
            <person name="Gill S.R."/>
            <person name="Kirkness E.F."/>
            <person name="Dougherty B.A."/>
            <person name="McKenney K."/>
            <person name="Adams M.D."/>
            <person name="Loftus B.J."/>
            <person name="Peterson S.N."/>
            <person name="Reich C.I."/>
            <person name="McNeil L.K."/>
            <person name="Badger J.H."/>
            <person name="Glodek A."/>
            <person name="Zhou L."/>
            <person name="Overbeek R."/>
            <person name="Gocayne J.D."/>
            <person name="Weidman J.F."/>
            <person name="McDonald L.A."/>
            <person name="Utterback T.R."/>
            <person name="Cotton M.D."/>
            <person name="Spriggs T."/>
            <person name="Artiach P."/>
            <person name="Kaine B.P."/>
            <person name="Sykes S.M."/>
            <person name="Sadow P.W."/>
            <person name="D'Andrea K.P."/>
            <person name="Bowman C."/>
            <person name="Fujii C."/>
            <person name="Garland S.A."/>
            <person name="Mason T.M."/>
            <person name="Olsen G.J."/>
            <person name="Fraser C.M."/>
            <person name="Smith H.O."/>
            <person name="Woese C.R."/>
            <person name="Venter J.C."/>
        </authorList>
    </citation>
    <scope>NUCLEOTIDE SEQUENCE [LARGE SCALE GENOMIC DNA]</scope>
    <source>
        <strain>ATCC 49558 / DSM 4304 / JCM 9628 / NBRC 100126 / VC-16</strain>
    </source>
</reference>
<comment type="similarity">
    <text evidence="1">Belongs to the eukaryotic ribosomal protein eS17 family.</text>
</comment>
<evidence type="ECO:0000255" key="1">
    <source>
        <dbReference type="HAMAP-Rule" id="MF_00511"/>
    </source>
</evidence>
<evidence type="ECO:0000305" key="2"/>
<feature type="chain" id="PRO_0000141549" description="Small ribosomal subunit protein eS17">
    <location>
        <begin position="1"/>
        <end position="65"/>
    </location>
</feature>
<proteinExistence type="inferred from homology"/>
<keyword id="KW-1185">Reference proteome</keyword>
<keyword id="KW-0687">Ribonucleoprotein</keyword>
<keyword id="KW-0689">Ribosomal protein</keyword>
<name>RS17E_ARCFU</name>
<dbReference type="EMBL" id="AE000782">
    <property type="protein sequence ID" value="AAB90340.1"/>
    <property type="molecule type" value="Genomic_DNA"/>
</dbReference>
<dbReference type="PIR" id="G69363">
    <property type="entry name" value="G69363"/>
</dbReference>
<dbReference type="RefSeq" id="WP_010878411.1">
    <property type="nucleotide sequence ID" value="NC_000917.1"/>
</dbReference>
<dbReference type="SMR" id="O29351"/>
<dbReference type="STRING" id="224325.AF_0911"/>
<dbReference type="PaxDb" id="224325-AF_0911"/>
<dbReference type="EnsemblBacteria" id="AAB90340">
    <property type="protein sequence ID" value="AAB90340"/>
    <property type="gene ID" value="AF_0911"/>
</dbReference>
<dbReference type="KEGG" id="afu:AF_0911"/>
<dbReference type="eggNOG" id="arCOG01885">
    <property type="taxonomic scope" value="Archaea"/>
</dbReference>
<dbReference type="HOGENOM" id="CLU_176720_1_0_2"/>
<dbReference type="OrthoDB" id="52479at2157"/>
<dbReference type="PhylomeDB" id="O29351"/>
<dbReference type="Proteomes" id="UP000002199">
    <property type="component" value="Chromosome"/>
</dbReference>
<dbReference type="GO" id="GO:0005829">
    <property type="term" value="C:cytosol"/>
    <property type="evidence" value="ECO:0007669"/>
    <property type="project" value="UniProtKB-ARBA"/>
</dbReference>
<dbReference type="GO" id="GO:1990904">
    <property type="term" value="C:ribonucleoprotein complex"/>
    <property type="evidence" value="ECO:0007669"/>
    <property type="project" value="UniProtKB-KW"/>
</dbReference>
<dbReference type="GO" id="GO:0005840">
    <property type="term" value="C:ribosome"/>
    <property type="evidence" value="ECO:0007669"/>
    <property type="project" value="UniProtKB-KW"/>
</dbReference>
<dbReference type="GO" id="GO:0003735">
    <property type="term" value="F:structural constituent of ribosome"/>
    <property type="evidence" value="ECO:0007669"/>
    <property type="project" value="InterPro"/>
</dbReference>
<dbReference type="GO" id="GO:0006412">
    <property type="term" value="P:translation"/>
    <property type="evidence" value="ECO:0007669"/>
    <property type="project" value="UniProtKB-UniRule"/>
</dbReference>
<dbReference type="Gene3D" id="1.10.60.20">
    <property type="entry name" value="Ribosomal protein S17e-like"/>
    <property type="match status" value="1"/>
</dbReference>
<dbReference type="HAMAP" id="MF_00511">
    <property type="entry name" value="Ribosomal_eS17"/>
    <property type="match status" value="1"/>
</dbReference>
<dbReference type="InterPro" id="IPR001210">
    <property type="entry name" value="Ribosomal_eS17"/>
</dbReference>
<dbReference type="InterPro" id="IPR018273">
    <property type="entry name" value="Ribosomal_eS17_CS"/>
</dbReference>
<dbReference type="InterPro" id="IPR036401">
    <property type="entry name" value="Ribosomal_eS17_sf"/>
</dbReference>
<dbReference type="NCBIfam" id="NF002242">
    <property type="entry name" value="PRK01151.1"/>
    <property type="match status" value="1"/>
</dbReference>
<dbReference type="PANTHER" id="PTHR10732">
    <property type="entry name" value="40S RIBOSOMAL PROTEIN S17"/>
    <property type="match status" value="1"/>
</dbReference>
<dbReference type="PANTHER" id="PTHR10732:SF0">
    <property type="entry name" value="40S RIBOSOMAL PROTEIN S17"/>
    <property type="match status" value="1"/>
</dbReference>
<dbReference type="Pfam" id="PF00833">
    <property type="entry name" value="Ribosomal_S17e"/>
    <property type="match status" value="1"/>
</dbReference>
<dbReference type="SUPFAM" id="SSF116820">
    <property type="entry name" value="Rps17e-like"/>
    <property type="match status" value="1"/>
</dbReference>
<dbReference type="PROSITE" id="PS00712">
    <property type="entry name" value="RIBOSOMAL_S17E"/>
    <property type="match status" value="1"/>
</dbReference>
<organism>
    <name type="scientific">Archaeoglobus fulgidus (strain ATCC 49558 / DSM 4304 / JCM 9628 / NBRC 100126 / VC-16)</name>
    <dbReference type="NCBI Taxonomy" id="224325"/>
    <lineage>
        <taxon>Archaea</taxon>
        <taxon>Methanobacteriati</taxon>
        <taxon>Methanobacteriota</taxon>
        <taxon>Archaeoglobi</taxon>
        <taxon>Archaeoglobales</taxon>
        <taxon>Archaeoglobaceae</taxon>
        <taxon>Archaeoglobus</taxon>
    </lineage>
</organism>
<sequence>MGTVKPAYIKVIARELLKKYPEVFTGNFDENKRLVAELTNIQSKTVRNRVAGYITRRVNRGLVNV</sequence>
<accession>O29351</accession>